<organism>
    <name type="scientific">Photobacterium profundum (strain SS9)</name>
    <dbReference type="NCBI Taxonomy" id="298386"/>
    <lineage>
        <taxon>Bacteria</taxon>
        <taxon>Pseudomonadati</taxon>
        <taxon>Pseudomonadota</taxon>
        <taxon>Gammaproteobacteria</taxon>
        <taxon>Vibrionales</taxon>
        <taxon>Vibrionaceae</taxon>
        <taxon>Photobacterium</taxon>
    </lineage>
</organism>
<keyword id="KW-1185">Reference proteome</keyword>
<keyword id="KW-0687">Ribonucleoprotein</keyword>
<keyword id="KW-0689">Ribosomal protein</keyword>
<keyword id="KW-0694">RNA-binding</keyword>
<keyword id="KW-0699">rRNA-binding</keyword>
<reference key="1">
    <citation type="journal article" date="2005" name="Science">
        <title>Life at depth: Photobacterium profundum genome sequence and expression analysis.</title>
        <authorList>
            <person name="Vezzi A."/>
            <person name="Campanaro S."/>
            <person name="D'Angelo M."/>
            <person name="Simonato F."/>
            <person name="Vitulo N."/>
            <person name="Lauro F.M."/>
            <person name="Cestaro A."/>
            <person name="Malacrida G."/>
            <person name="Simionati B."/>
            <person name="Cannata N."/>
            <person name="Romualdi C."/>
            <person name="Bartlett D.H."/>
            <person name="Valle G."/>
        </authorList>
    </citation>
    <scope>NUCLEOTIDE SEQUENCE [LARGE SCALE GENOMIC DNA]</scope>
    <source>
        <strain>ATCC BAA-1253 / SS9</strain>
    </source>
</reference>
<evidence type="ECO:0000255" key="1">
    <source>
        <dbReference type="HAMAP-Rule" id="MF_01302"/>
    </source>
</evidence>
<evidence type="ECO:0000305" key="2"/>
<gene>
    <name evidence="1" type="primary">rpsH</name>
    <name type="ordered locus">PBPRA0334</name>
</gene>
<name>RS8_PHOPR</name>
<proteinExistence type="inferred from homology"/>
<dbReference type="EMBL" id="CR378663">
    <property type="protein sequence ID" value="CAG18773.1"/>
    <property type="molecule type" value="Genomic_DNA"/>
</dbReference>
<dbReference type="RefSeq" id="WP_011217138.1">
    <property type="nucleotide sequence ID" value="NC_006370.1"/>
</dbReference>
<dbReference type="SMR" id="Q6LVA2"/>
<dbReference type="STRING" id="298386.PBPRA0334"/>
<dbReference type="KEGG" id="ppr:PBPRA0334"/>
<dbReference type="eggNOG" id="COG0096">
    <property type="taxonomic scope" value="Bacteria"/>
</dbReference>
<dbReference type="HOGENOM" id="CLU_098428_0_0_6"/>
<dbReference type="Proteomes" id="UP000000593">
    <property type="component" value="Chromosome 1"/>
</dbReference>
<dbReference type="GO" id="GO:1990904">
    <property type="term" value="C:ribonucleoprotein complex"/>
    <property type="evidence" value="ECO:0007669"/>
    <property type="project" value="UniProtKB-KW"/>
</dbReference>
<dbReference type="GO" id="GO:0005840">
    <property type="term" value="C:ribosome"/>
    <property type="evidence" value="ECO:0007669"/>
    <property type="project" value="UniProtKB-KW"/>
</dbReference>
<dbReference type="GO" id="GO:0019843">
    <property type="term" value="F:rRNA binding"/>
    <property type="evidence" value="ECO:0007669"/>
    <property type="project" value="UniProtKB-UniRule"/>
</dbReference>
<dbReference type="GO" id="GO:0003735">
    <property type="term" value="F:structural constituent of ribosome"/>
    <property type="evidence" value="ECO:0007669"/>
    <property type="project" value="InterPro"/>
</dbReference>
<dbReference type="GO" id="GO:0006412">
    <property type="term" value="P:translation"/>
    <property type="evidence" value="ECO:0007669"/>
    <property type="project" value="UniProtKB-UniRule"/>
</dbReference>
<dbReference type="FunFam" id="3.30.1370.30:FF:000003">
    <property type="entry name" value="30S ribosomal protein S8"/>
    <property type="match status" value="1"/>
</dbReference>
<dbReference type="FunFam" id="3.30.1490.10:FF:000001">
    <property type="entry name" value="30S ribosomal protein S8"/>
    <property type="match status" value="1"/>
</dbReference>
<dbReference type="Gene3D" id="3.30.1370.30">
    <property type="match status" value="1"/>
</dbReference>
<dbReference type="Gene3D" id="3.30.1490.10">
    <property type="match status" value="1"/>
</dbReference>
<dbReference type="HAMAP" id="MF_01302_B">
    <property type="entry name" value="Ribosomal_uS8_B"/>
    <property type="match status" value="1"/>
</dbReference>
<dbReference type="InterPro" id="IPR000630">
    <property type="entry name" value="Ribosomal_uS8"/>
</dbReference>
<dbReference type="InterPro" id="IPR047863">
    <property type="entry name" value="Ribosomal_uS8_CS"/>
</dbReference>
<dbReference type="InterPro" id="IPR035987">
    <property type="entry name" value="Ribosomal_uS8_sf"/>
</dbReference>
<dbReference type="NCBIfam" id="NF001109">
    <property type="entry name" value="PRK00136.1"/>
    <property type="match status" value="1"/>
</dbReference>
<dbReference type="PANTHER" id="PTHR11758">
    <property type="entry name" value="40S RIBOSOMAL PROTEIN S15A"/>
    <property type="match status" value="1"/>
</dbReference>
<dbReference type="Pfam" id="PF00410">
    <property type="entry name" value="Ribosomal_S8"/>
    <property type="match status" value="1"/>
</dbReference>
<dbReference type="SUPFAM" id="SSF56047">
    <property type="entry name" value="Ribosomal protein S8"/>
    <property type="match status" value="1"/>
</dbReference>
<dbReference type="PROSITE" id="PS00053">
    <property type="entry name" value="RIBOSOMAL_S8"/>
    <property type="match status" value="1"/>
</dbReference>
<protein>
    <recommendedName>
        <fullName evidence="1">Small ribosomal subunit protein uS8</fullName>
    </recommendedName>
    <alternativeName>
        <fullName evidence="2">30S ribosomal protein S8</fullName>
    </alternativeName>
</protein>
<sequence>MSMQDPISDMLTRLRNGQTAKKVAVKMPSSKQKVAIAALLKEEGFVAEFTVTGDVKPELEVTLKYFEANPVIEQIQRVSRPGLRIYKKKDALPSVMGGLGIAVVSTSKGLMTDRAARKAGLGGEIICYVA</sequence>
<comment type="function">
    <text evidence="1">One of the primary rRNA binding proteins, it binds directly to 16S rRNA central domain where it helps coordinate assembly of the platform of the 30S subunit.</text>
</comment>
<comment type="subunit">
    <text evidence="1">Part of the 30S ribosomal subunit. Contacts proteins S5 and S12.</text>
</comment>
<comment type="similarity">
    <text evidence="1">Belongs to the universal ribosomal protein uS8 family.</text>
</comment>
<feature type="chain" id="PRO_0000126460" description="Small ribosomal subunit protein uS8">
    <location>
        <begin position="1"/>
        <end position="130"/>
    </location>
</feature>
<accession>Q6LVA2</accession>